<accession>A8GVV6</accession>
<keyword id="KW-0963">Cytoplasm</keyword>
<keyword id="KW-0489">Methyltransferase</keyword>
<keyword id="KW-0698">rRNA processing</keyword>
<keyword id="KW-0949">S-adenosyl-L-methionine</keyword>
<keyword id="KW-0808">Transferase</keyword>
<name>RSMH_RICB8</name>
<organism>
    <name type="scientific">Rickettsia bellii (strain OSU 85-389)</name>
    <dbReference type="NCBI Taxonomy" id="391896"/>
    <lineage>
        <taxon>Bacteria</taxon>
        <taxon>Pseudomonadati</taxon>
        <taxon>Pseudomonadota</taxon>
        <taxon>Alphaproteobacteria</taxon>
        <taxon>Rickettsiales</taxon>
        <taxon>Rickettsiaceae</taxon>
        <taxon>Rickettsieae</taxon>
        <taxon>Rickettsia</taxon>
        <taxon>belli group</taxon>
    </lineage>
</organism>
<dbReference type="EC" id="2.1.1.199" evidence="1"/>
<dbReference type="EMBL" id="CP000849">
    <property type="protein sequence ID" value="ABV78983.1"/>
    <property type="molecule type" value="Genomic_DNA"/>
</dbReference>
<dbReference type="RefSeq" id="WP_012151769.1">
    <property type="nucleotide sequence ID" value="NC_009883.1"/>
</dbReference>
<dbReference type="SMR" id="A8GVV6"/>
<dbReference type="KEGG" id="rbo:A1I_03090"/>
<dbReference type="HOGENOM" id="CLU_038422_1_1_5"/>
<dbReference type="GO" id="GO:0005737">
    <property type="term" value="C:cytoplasm"/>
    <property type="evidence" value="ECO:0007669"/>
    <property type="project" value="UniProtKB-SubCell"/>
</dbReference>
<dbReference type="GO" id="GO:0071424">
    <property type="term" value="F:rRNA (cytosine-N4-)-methyltransferase activity"/>
    <property type="evidence" value="ECO:0007669"/>
    <property type="project" value="UniProtKB-UniRule"/>
</dbReference>
<dbReference type="GO" id="GO:0070475">
    <property type="term" value="P:rRNA base methylation"/>
    <property type="evidence" value="ECO:0007669"/>
    <property type="project" value="UniProtKB-UniRule"/>
</dbReference>
<dbReference type="CDD" id="cd02440">
    <property type="entry name" value="AdoMet_MTases"/>
    <property type="match status" value="1"/>
</dbReference>
<dbReference type="FunFam" id="1.10.150.170:FF:000003">
    <property type="entry name" value="Ribosomal RNA small subunit methyltransferase H"/>
    <property type="match status" value="1"/>
</dbReference>
<dbReference type="Gene3D" id="1.10.150.170">
    <property type="entry name" value="Putative methyltransferase TM0872, insert domain"/>
    <property type="match status" value="1"/>
</dbReference>
<dbReference type="Gene3D" id="3.40.50.150">
    <property type="entry name" value="Vaccinia Virus protein VP39"/>
    <property type="match status" value="1"/>
</dbReference>
<dbReference type="HAMAP" id="MF_01007">
    <property type="entry name" value="16SrRNA_methyltr_H"/>
    <property type="match status" value="1"/>
</dbReference>
<dbReference type="InterPro" id="IPR002903">
    <property type="entry name" value="RsmH"/>
</dbReference>
<dbReference type="InterPro" id="IPR023397">
    <property type="entry name" value="SAM-dep_MeTrfase_MraW_recog"/>
</dbReference>
<dbReference type="InterPro" id="IPR029063">
    <property type="entry name" value="SAM-dependent_MTases_sf"/>
</dbReference>
<dbReference type="NCBIfam" id="TIGR00006">
    <property type="entry name" value="16S rRNA (cytosine(1402)-N(4))-methyltransferase RsmH"/>
    <property type="match status" value="1"/>
</dbReference>
<dbReference type="PANTHER" id="PTHR11265:SF0">
    <property type="entry name" value="12S RRNA N4-METHYLCYTIDINE METHYLTRANSFERASE"/>
    <property type="match status" value="1"/>
</dbReference>
<dbReference type="PANTHER" id="PTHR11265">
    <property type="entry name" value="S-ADENOSYL-METHYLTRANSFERASE MRAW"/>
    <property type="match status" value="1"/>
</dbReference>
<dbReference type="Pfam" id="PF01795">
    <property type="entry name" value="Methyltransf_5"/>
    <property type="match status" value="1"/>
</dbReference>
<dbReference type="PIRSF" id="PIRSF004486">
    <property type="entry name" value="MraW"/>
    <property type="match status" value="1"/>
</dbReference>
<dbReference type="SUPFAM" id="SSF81799">
    <property type="entry name" value="Putative methyltransferase TM0872, insert domain"/>
    <property type="match status" value="1"/>
</dbReference>
<dbReference type="SUPFAM" id="SSF53335">
    <property type="entry name" value="S-adenosyl-L-methionine-dependent methyltransferases"/>
    <property type="match status" value="1"/>
</dbReference>
<feature type="chain" id="PRO_1000062833" description="Ribosomal RNA small subunit methyltransferase H">
    <location>
        <begin position="1"/>
        <end position="305"/>
    </location>
</feature>
<feature type="binding site" evidence="1">
    <location>
        <begin position="33"/>
        <end position="35"/>
    </location>
    <ligand>
        <name>S-adenosyl-L-methionine</name>
        <dbReference type="ChEBI" id="CHEBI:59789"/>
    </ligand>
</feature>
<feature type="binding site" evidence="1">
    <location>
        <position position="51"/>
    </location>
    <ligand>
        <name>S-adenosyl-L-methionine</name>
        <dbReference type="ChEBI" id="CHEBI:59789"/>
    </ligand>
</feature>
<feature type="binding site" evidence="1">
    <location>
        <position position="82"/>
    </location>
    <ligand>
        <name>S-adenosyl-L-methionine</name>
        <dbReference type="ChEBI" id="CHEBI:59789"/>
    </ligand>
</feature>
<feature type="binding site" evidence="1">
    <location>
        <position position="96"/>
    </location>
    <ligand>
        <name>S-adenosyl-L-methionine</name>
        <dbReference type="ChEBI" id="CHEBI:59789"/>
    </ligand>
</feature>
<feature type="binding site" evidence="1">
    <location>
        <position position="103"/>
    </location>
    <ligand>
        <name>S-adenosyl-L-methionine</name>
        <dbReference type="ChEBI" id="CHEBI:59789"/>
    </ligand>
</feature>
<proteinExistence type="inferred from homology"/>
<sequence>MQQPHIPVMLNEMLKFLAPKAGESYLDCTFGAGGYSKALLENCDCYVTALDRDPNVIKKAEEIKHNYKDRFDFVETNFGNCFAKLESKKFDGIVLDLGVSSMQLDIPDRGFSFLHDGPLDMRMSGQGLSAEEFINTAEEKDLADVIYKYGDETFSRRIAKKIVEVRKAARIDSTGKLADIVHSCIGFRKGKIDPATKTFQAIRIYINNELGELEQFLANVKNILKKDGRLVVVSFHSLEDRIVKNFFKENSEKPVARSKYAKEDIMLNPDKWLKIITNKAEIPSDKEISLNVRARSAKLRAAKKI</sequence>
<protein>
    <recommendedName>
        <fullName evidence="1">Ribosomal RNA small subunit methyltransferase H</fullName>
        <ecNumber evidence="1">2.1.1.199</ecNumber>
    </recommendedName>
    <alternativeName>
        <fullName evidence="1">16S rRNA m(4)C1402 methyltransferase</fullName>
    </alternativeName>
    <alternativeName>
        <fullName evidence="1">rRNA (cytosine-N(4)-)-methyltransferase RsmH</fullName>
    </alternativeName>
</protein>
<reference key="1">
    <citation type="submission" date="2007-09" db="EMBL/GenBank/DDBJ databases">
        <title>Complete genome sequencing of Rickettsia bellii.</title>
        <authorList>
            <person name="Madan A."/>
            <person name="Lee H."/>
            <person name="Madan A."/>
            <person name="Yoon J.-G."/>
            <person name="Ryu G.-Y."/>
            <person name="Dasch G."/>
            <person name="Ereemeva M."/>
        </authorList>
    </citation>
    <scope>NUCLEOTIDE SEQUENCE [LARGE SCALE GENOMIC DNA]</scope>
    <source>
        <strain>OSU 85-389</strain>
    </source>
</reference>
<gene>
    <name evidence="1" type="primary">rsmH</name>
    <name type="synonym">mraW</name>
    <name type="ordered locus">A1I_03090</name>
</gene>
<evidence type="ECO:0000255" key="1">
    <source>
        <dbReference type="HAMAP-Rule" id="MF_01007"/>
    </source>
</evidence>
<comment type="function">
    <text evidence="1">Specifically methylates the N4 position of cytidine in position 1402 (C1402) of 16S rRNA.</text>
</comment>
<comment type="catalytic activity">
    <reaction evidence="1">
        <text>cytidine(1402) in 16S rRNA + S-adenosyl-L-methionine = N(4)-methylcytidine(1402) in 16S rRNA + S-adenosyl-L-homocysteine + H(+)</text>
        <dbReference type="Rhea" id="RHEA:42928"/>
        <dbReference type="Rhea" id="RHEA-COMP:10286"/>
        <dbReference type="Rhea" id="RHEA-COMP:10287"/>
        <dbReference type="ChEBI" id="CHEBI:15378"/>
        <dbReference type="ChEBI" id="CHEBI:57856"/>
        <dbReference type="ChEBI" id="CHEBI:59789"/>
        <dbReference type="ChEBI" id="CHEBI:74506"/>
        <dbReference type="ChEBI" id="CHEBI:82748"/>
        <dbReference type="EC" id="2.1.1.199"/>
    </reaction>
</comment>
<comment type="subcellular location">
    <subcellularLocation>
        <location evidence="1">Cytoplasm</location>
    </subcellularLocation>
</comment>
<comment type="similarity">
    <text evidence="1">Belongs to the methyltransferase superfamily. RsmH family.</text>
</comment>